<evidence type="ECO:0000250" key="1"/>
<evidence type="ECO:0000250" key="2">
    <source>
        <dbReference type="UniProtKB" id="O19182"/>
    </source>
</evidence>
<evidence type="ECO:0000250" key="3">
    <source>
        <dbReference type="UniProtKB" id="P63252"/>
    </source>
</evidence>
<evidence type="ECO:0000250" key="4">
    <source>
        <dbReference type="UniProtKB" id="Q64273"/>
    </source>
</evidence>
<evidence type="ECO:0000255" key="5"/>
<evidence type="ECO:0000256" key="6">
    <source>
        <dbReference type="SAM" id="MobiDB-lite"/>
    </source>
</evidence>
<evidence type="ECO:0000305" key="7"/>
<protein>
    <recommendedName>
        <fullName>Inward rectifier potassium channel 2</fullName>
    </recommendedName>
    <alternativeName>
        <fullName>Cardiac inward rectifier potassium channel</fullName>
    </alternativeName>
    <alternativeName>
        <fullName>Inward rectifier K(+) channel Kir2.1</fullName>
        <shortName>IRK-1</shortName>
    </alternativeName>
    <alternativeName>
        <fullName>Potassium channel, inwardly rectifying subfamily J member 2</fullName>
    </alternativeName>
</protein>
<proteinExistence type="evidence at transcript level"/>
<dbReference type="EMBL" id="AF021135">
    <property type="protein sequence ID" value="AAB88793.1"/>
    <property type="molecule type" value="mRNA"/>
</dbReference>
<dbReference type="RefSeq" id="NP_001028031.1">
    <property type="nucleotide sequence ID" value="NM_001032859.1"/>
</dbReference>
<dbReference type="RefSeq" id="XP_014975696.1">
    <property type="nucleotide sequence ID" value="XM_015120210.2"/>
</dbReference>
<dbReference type="SMR" id="P63253"/>
<dbReference type="FunCoup" id="P63253">
    <property type="interactions" value="745"/>
</dbReference>
<dbReference type="STRING" id="9544.ENSMMUP00000080191"/>
<dbReference type="PaxDb" id="9544-ENSMMUP00000018468"/>
<dbReference type="Ensembl" id="ENSMMUT00000079387.1">
    <property type="protein sequence ID" value="ENSMMUP00000080191.1"/>
    <property type="gene ID" value="ENSMMUG00000056768.1"/>
</dbReference>
<dbReference type="GeneID" id="574189"/>
<dbReference type="KEGG" id="mcc:574189"/>
<dbReference type="CTD" id="3759"/>
<dbReference type="VEuPathDB" id="HostDB:ENSMMUG00000056768"/>
<dbReference type="VGNC" id="VGNC:73988">
    <property type="gene designation" value="KCNJ2"/>
</dbReference>
<dbReference type="eggNOG" id="KOG3827">
    <property type="taxonomic scope" value="Eukaryota"/>
</dbReference>
<dbReference type="GeneTree" id="ENSGT01030000234586"/>
<dbReference type="HOGENOM" id="CLU_022738_3_0_1"/>
<dbReference type="InParanoid" id="P63253"/>
<dbReference type="OrthoDB" id="273257at2759"/>
<dbReference type="TreeFam" id="TF313676"/>
<dbReference type="Proteomes" id="UP000006718">
    <property type="component" value="Chromosome 16"/>
</dbReference>
<dbReference type="Bgee" id="ENSMMUG00000056768">
    <property type="expression patterns" value="Expressed in heart and 22 other cell types or tissues"/>
</dbReference>
<dbReference type="ExpressionAtlas" id="P63253">
    <property type="expression patterns" value="baseline"/>
</dbReference>
<dbReference type="GO" id="GO:0016020">
    <property type="term" value="C:membrane"/>
    <property type="evidence" value="ECO:0000250"/>
    <property type="project" value="UniProtKB"/>
</dbReference>
<dbReference type="GO" id="GO:0005886">
    <property type="term" value="C:plasma membrane"/>
    <property type="evidence" value="ECO:0000318"/>
    <property type="project" value="GO_Central"/>
</dbReference>
<dbReference type="GO" id="GO:0030315">
    <property type="term" value="C:T-tubule"/>
    <property type="evidence" value="ECO:0000250"/>
    <property type="project" value="UniProtKB"/>
</dbReference>
<dbReference type="GO" id="GO:0008076">
    <property type="term" value="C:voltage-gated potassium channel complex"/>
    <property type="evidence" value="ECO:0007669"/>
    <property type="project" value="Ensembl"/>
</dbReference>
<dbReference type="GO" id="GO:0042802">
    <property type="term" value="F:identical protein binding"/>
    <property type="evidence" value="ECO:0007669"/>
    <property type="project" value="Ensembl"/>
</dbReference>
<dbReference type="GO" id="GO:0005242">
    <property type="term" value="F:inward rectifier potassium channel activity"/>
    <property type="evidence" value="ECO:0000250"/>
    <property type="project" value="UniProtKB"/>
</dbReference>
<dbReference type="GO" id="GO:0005546">
    <property type="term" value="F:phosphatidylinositol-4,5-bisphosphate binding"/>
    <property type="evidence" value="ECO:0000250"/>
    <property type="project" value="UniProtKB"/>
</dbReference>
<dbReference type="GO" id="GO:0086008">
    <property type="term" value="F:voltage-gated potassium channel activity involved in cardiac muscle cell action potential repolarization"/>
    <property type="evidence" value="ECO:0007669"/>
    <property type="project" value="Ensembl"/>
</dbReference>
<dbReference type="GO" id="GO:0086002">
    <property type="term" value="P:cardiac muscle cell action potential involved in contraction"/>
    <property type="evidence" value="ECO:0007669"/>
    <property type="project" value="Ensembl"/>
</dbReference>
<dbReference type="GO" id="GO:0015693">
    <property type="term" value="P:magnesium ion transport"/>
    <property type="evidence" value="ECO:0007669"/>
    <property type="project" value="Ensembl"/>
</dbReference>
<dbReference type="GO" id="GO:1990573">
    <property type="term" value="P:potassium ion import across plasma membrane"/>
    <property type="evidence" value="ECO:0000318"/>
    <property type="project" value="GO_Central"/>
</dbReference>
<dbReference type="GO" id="GO:0006813">
    <property type="term" value="P:potassium ion transport"/>
    <property type="evidence" value="ECO:0000250"/>
    <property type="project" value="UniProtKB"/>
</dbReference>
<dbReference type="GO" id="GO:0051289">
    <property type="term" value="P:protein homotetramerization"/>
    <property type="evidence" value="ECO:0000250"/>
    <property type="project" value="UniProtKB"/>
</dbReference>
<dbReference type="GO" id="GO:0086091">
    <property type="term" value="P:regulation of heart rate by cardiac conduction"/>
    <property type="evidence" value="ECO:0007669"/>
    <property type="project" value="Ensembl"/>
</dbReference>
<dbReference type="GO" id="GO:0060306">
    <property type="term" value="P:regulation of membrane repolarization"/>
    <property type="evidence" value="ECO:0007669"/>
    <property type="project" value="Ensembl"/>
</dbReference>
<dbReference type="GO" id="GO:0034765">
    <property type="term" value="P:regulation of monoatomic ion transmembrane transport"/>
    <property type="evidence" value="ECO:0000318"/>
    <property type="project" value="GO_Central"/>
</dbReference>
<dbReference type="GO" id="GO:0014861">
    <property type="term" value="P:regulation of skeletal muscle contraction via regulation of action potential"/>
    <property type="evidence" value="ECO:0007669"/>
    <property type="project" value="Ensembl"/>
</dbReference>
<dbReference type="GO" id="GO:0055119">
    <property type="term" value="P:relaxation of cardiac muscle"/>
    <property type="evidence" value="ECO:0007669"/>
    <property type="project" value="Ensembl"/>
</dbReference>
<dbReference type="GO" id="GO:0090076">
    <property type="term" value="P:relaxation of skeletal muscle"/>
    <property type="evidence" value="ECO:0007669"/>
    <property type="project" value="Ensembl"/>
</dbReference>
<dbReference type="FunFam" id="1.10.287.70:FF:000039">
    <property type="entry name" value="ATP-sensitive inward rectifier potassium channel 12"/>
    <property type="match status" value="1"/>
</dbReference>
<dbReference type="FunFam" id="2.60.40.1400:FF:000001">
    <property type="entry name" value="G protein-activated inward rectifier potassium channel 2"/>
    <property type="match status" value="1"/>
</dbReference>
<dbReference type="Gene3D" id="1.10.287.70">
    <property type="match status" value="1"/>
</dbReference>
<dbReference type="Gene3D" id="2.60.40.1400">
    <property type="entry name" value="G protein-activated inward rectifier potassium channel 1"/>
    <property type="match status" value="1"/>
</dbReference>
<dbReference type="InterPro" id="IPR014756">
    <property type="entry name" value="Ig_E-set"/>
</dbReference>
<dbReference type="InterPro" id="IPR041647">
    <property type="entry name" value="IRK_C"/>
</dbReference>
<dbReference type="InterPro" id="IPR016449">
    <property type="entry name" value="K_chnl_inward-rec_Kir"/>
</dbReference>
<dbReference type="InterPro" id="IPR003271">
    <property type="entry name" value="K_chnl_inward-rec_Kir2.1"/>
</dbReference>
<dbReference type="InterPro" id="IPR013518">
    <property type="entry name" value="K_chnl_inward-rec_Kir_cyto"/>
</dbReference>
<dbReference type="InterPro" id="IPR013673">
    <property type="entry name" value="K_chnl_inward-rec_Kir_N"/>
</dbReference>
<dbReference type="InterPro" id="IPR040445">
    <property type="entry name" value="Kir_TM"/>
</dbReference>
<dbReference type="PANTHER" id="PTHR11767">
    <property type="entry name" value="INWARD RECTIFIER POTASSIUM CHANNEL"/>
    <property type="match status" value="1"/>
</dbReference>
<dbReference type="PANTHER" id="PTHR11767:SF43">
    <property type="entry name" value="INWARD RECTIFIER POTASSIUM CHANNEL 2"/>
    <property type="match status" value="1"/>
</dbReference>
<dbReference type="Pfam" id="PF01007">
    <property type="entry name" value="IRK"/>
    <property type="match status" value="1"/>
</dbReference>
<dbReference type="Pfam" id="PF17655">
    <property type="entry name" value="IRK_C"/>
    <property type="match status" value="1"/>
</dbReference>
<dbReference type="Pfam" id="PF08466">
    <property type="entry name" value="IRK_N"/>
    <property type="match status" value="1"/>
</dbReference>
<dbReference type="PIRSF" id="PIRSF005465">
    <property type="entry name" value="GIRK_kir"/>
    <property type="match status" value="1"/>
</dbReference>
<dbReference type="PRINTS" id="PR01324">
    <property type="entry name" value="KIR21CHANNEL"/>
</dbReference>
<dbReference type="PRINTS" id="PR01320">
    <property type="entry name" value="KIRCHANNEL"/>
</dbReference>
<dbReference type="SUPFAM" id="SSF81296">
    <property type="entry name" value="E set domains"/>
    <property type="match status" value="1"/>
</dbReference>
<dbReference type="SUPFAM" id="SSF81324">
    <property type="entry name" value="Voltage-gated potassium channels"/>
    <property type="match status" value="1"/>
</dbReference>
<gene>
    <name type="primary">KCNJ2</name>
    <name type="synonym">IRK1</name>
</gene>
<name>KCNJ2_MACMU</name>
<comment type="function">
    <text evidence="3">Inward rectifier potassium channels are characterized by a greater tendency to allow potassium to flow into the cell rather than out of it. Their voltage dependence is regulated by the concentration of extracellular potassium; as external potassium is raised, the voltage range of the channel opening shifts to more positive voltages. The inward rectification is mainly due to the blockage of outward current by internal magnesium. Can be blocked by extracellular barium or cesium. Probably participates in establishing action potential waveform and excitability of neuronal and muscle tissues.</text>
</comment>
<comment type="catalytic activity">
    <reaction evidence="3">
        <text>K(+)(in) = K(+)(out)</text>
        <dbReference type="Rhea" id="RHEA:29463"/>
        <dbReference type="ChEBI" id="CHEBI:29103"/>
    </reaction>
</comment>
<comment type="activity regulation">
    <text evidence="4">Activated by phosphatidylinositol 4,5 biphosphate (PtdIns(4,5)P2).</text>
</comment>
<comment type="subunit">
    <text evidence="3 4">Homotetramer. Homomultimeric and heteromultimeric association with KCNJ4/Kir2.3. Can form heteromeric channels with Kir2.6/KCNJ18 (By similarity). Associates, via its PDZ-recognition domain, with a complex containing LIN7A, LIN7B, LIN7C, DLG1, CASK and APBA1.</text>
</comment>
<comment type="subcellular location">
    <subcellularLocation>
        <location evidence="2">Cell membrane</location>
        <topology evidence="5">Multi-pass membrane protein</topology>
    </subcellularLocation>
    <subcellularLocation>
        <location evidence="4">Cell membrane</location>
        <location evidence="4">Sarcolemma</location>
        <location evidence="4">T-tubule</location>
    </subcellularLocation>
</comment>
<comment type="PTM">
    <text evidence="3">S-nitrosylation increases the open probability and inward rectifying currents.</text>
</comment>
<comment type="similarity">
    <text evidence="7">Belongs to the inward rectifier-type potassium channel (TC 1.A.2.1) family. KCNJ2 subfamily.</text>
</comment>
<keyword id="KW-1003">Cell membrane</keyword>
<keyword id="KW-0407">Ion channel</keyword>
<keyword id="KW-0406">Ion transport</keyword>
<keyword id="KW-0472">Membrane</keyword>
<keyword id="KW-0630">Potassium</keyword>
<keyword id="KW-0633">Potassium transport</keyword>
<keyword id="KW-1185">Reference proteome</keyword>
<keyword id="KW-0702">S-nitrosylation</keyword>
<keyword id="KW-0812">Transmembrane</keyword>
<keyword id="KW-1133">Transmembrane helix</keyword>
<keyword id="KW-0813">Transport</keyword>
<keyword id="KW-0851">Voltage-gated channel</keyword>
<sequence length="427" mass="48288">MGSVRTNRYSIVSSEEDGMKLATMAVANGFGNGKSKVHTRQQCRSRFVKKDGHCNVQFINVGEKGQRYLADIFTTCVDIRWRWMLVIFCLAFVLSWLFFGCVFWLIALLHGDLDASKEGKACVSEVNSFTAAFLFSIETQTTIGYGFRCVTDECPIAVFMVVFQSIVGCIIDAFIIGAVMAKMAKPKKRNETLVFSHNAVIAMRDGKLCLMWRVGNLRKSHLVEAHVRAQLLKSRITSEGEYIPLDQIDINVGFDSGIDRIFLVSPITIVHEIDEDSPLYDLSKQDIDNADFEIVVILEGMVEATAMTTQCRSSYLANEILWGHRYEPVLFEEKHYYKVDYSRFHKTYEVPNTPLCSARDLAEKKYILSNANSFCYENEVALTSKEEDDSENGVPESTSTDTPPDIDLHNQASVPLEPRPLRRESEI</sequence>
<organism>
    <name type="scientific">Macaca mulatta</name>
    <name type="common">Rhesus macaque</name>
    <dbReference type="NCBI Taxonomy" id="9544"/>
    <lineage>
        <taxon>Eukaryota</taxon>
        <taxon>Metazoa</taxon>
        <taxon>Chordata</taxon>
        <taxon>Craniata</taxon>
        <taxon>Vertebrata</taxon>
        <taxon>Euteleostomi</taxon>
        <taxon>Mammalia</taxon>
        <taxon>Eutheria</taxon>
        <taxon>Euarchontoglires</taxon>
        <taxon>Primates</taxon>
        <taxon>Haplorrhini</taxon>
        <taxon>Catarrhini</taxon>
        <taxon>Cercopithecidae</taxon>
        <taxon>Cercopithecinae</taxon>
        <taxon>Macaca</taxon>
    </lineage>
</organism>
<reference key="1">
    <citation type="journal article" date="1998" name="Exp. Eye Res.">
        <title>Inwardly rectifying potassium channels in lens epithelium are from the IRK1 (Kir 2.1) family.</title>
        <authorList>
            <person name="Rae J.L."/>
            <person name="Shepard A.R."/>
        </authorList>
    </citation>
    <scope>NUCLEOTIDE SEQUENCE [MRNA]</scope>
    <source>
        <tissue>Lens epithelium</tissue>
    </source>
</reference>
<accession>P63253</accession>
<accession>O15110</accession>
<accession>P48049</accession>
<feature type="chain" id="PRO_0000154924" description="Inward rectifier potassium channel 2">
    <location>
        <begin position="1"/>
        <end position="427"/>
    </location>
</feature>
<feature type="topological domain" description="Cytoplasmic" evidence="1">
    <location>
        <begin position="1"/>
        <end position="81"/>
    </location>
</feature>
<feature type="transmembrane region" description="Helical; Name=M1" evidence="1">
    <location>
        <begin position="82"/>
        <end position="106"/>
    </location>
</feature>
<feature type="topological domain" description="Extracellular" evidence="1">
    <location>
        <begin position="107"/>
        <end position="128"/>
    </location>
</feature>
<feature type="intramembrane region" description="Helical; Pore-forming; Name=H5" evidence="1">
    <location>
        <begin position="129"/>
        <end position="140"/>
    </location>
</feature>
<feature type="intramembrane region" description="Pore-forming" evidence="1">
    <location>
        <begin position="141"/>
        <end position="147"/>
    </location>
</feature>
<feature type="topological domain" description="Extracellular" evidence="1">
    <location>
        <begin position="148"/>
        <end position="156"/>
    </location>
</feature>
<feature type="transmembrane region" description="Helical; Name=M2" evidence="1">
    <location>
        <begin position="157"/>
        <end position="178"/>
    </location>
</feature>
<feature type="topological domain" description="Cytoplasmic" evidence="1">
    <location>
        <begin position="179"/>
        <end position="427"/>
    </location>
</feature>
<feature type="region of interest" description="Polyphosphoinositide (PIP2)-binding" evidence="4">
    <location>
        <begin position="181"/>
        <end position="208"/>
    </location>
</feature>
<feature type="region of interest" description="Disordered" evidence="6">
    <location>
        <begin position="384"/>
        <end position="427"/>
    </location>
</feature>
<feature type="short sequence motif" description="Selectivity filter" evidence="1">
    <location>
        <begin position="142"/>
        <end position="147"/>
    </location>
</feature>
<feature type="short sequence motif" description="PDZ-binding" evidence="5">
    <location>
        <begin position="425"/>
        <end position="427"/>
    </location>
</feature>
<feature type="site" description="Role in the control of polyamine-mediated channel gating and in the blocking by intracellular magnesium" evidence="1">
    <location>
        <position position="172"/>
    </location>
</feature>
<feature type="modified residue" description="S-nitrosocysteine" evidence="3">
    <location>
        <position position="76"/>
    </location>
</feature>